<name>MGSA_BURM7</name>
<comment type="function">
    <text evidence="1">Catalyzes the formation of methylglyoxal from dihydroxyacetone phosphate.</text>
</comment>
<comment type="catalytic activity">
    <reaction evidence="1">
        <text>dihydroxyacetone phosphate = methylglyoxal + phosphate</text>
        <dbReference type="Rhea" id="RHEA:17937"/>
        <dbReference type="ChEBI" id="CHEBI:17158"/>
        <dbReference type="ChEBI" id="CHEBI:43474"/>
        <dbReference type="ChEBI" id="CHEBI:57642"/>
        <dbReference type="EC" id="4.2.3.3"/>
    </reaction>
</comment>
<comment type="similarity">
    <text evidence="1">Belongs to the methylglyoxal synthase family.</text>
</comment>
<keyword id="KW-0456">Lyase</keyword>
<feature type="chain" id="PRO_1000017792" description="Methylglyoxal synthase">
    <location>
        <begin position="1"/>
        <end position="130"/>
    </location>
</feature>
<feature type="domain" description="MGS-like" evidence="1">
    <location>
        <begin position="1"/>
        <end position="130"/>
    </location>
</feature>
<feature type="active site" description="Proton donor/acceptor" evidence="1">
    <location>
        <position position="63"/>
    </location>
</feature>
<feature type="binding site" evidence="1">
    <location>
        <position position="11"/>
    </location>
    <ligand>
        <name>substrate</name>
    </ligand>
</feature>
<feature type="binding site" evidence="1">
    <location>
        <position position="15"/>
    </location>
    <ligand>
        <name>substrate</name>
    </ligand>
</feature>
<feature type="binding site" evidence="1">
    <location>
        <begin position="37"/>
        <end position="40"/>
    </location>
    <ligand>
        <name>substrate</name>
    </ligand>
</feature>
<feature type="binding site" evidence="1">
    <location>
        <begin position="57"/>
        <end position="58"/>
    </location>
    <ligand>
        <name>substrate</name>
    </ligand>
</feature>
<feature type="binding site" evidence="1">
    <location>
        <position position="90"/>
    </location>
    <ligand>
        <name>substrate</name>
    </ligand>
</feature>
<sequence>MSTPRIALIAHDAKKDDIVALAGAYRATLAQCRLVATGTTGGRIAQAHGLDVERKLSGPLGGDLQIGAELADGRVDIVIFLRDPMTAQPHDPDITALVRACDVHDVPVATNVATARVLLDDLARRLTANA</sequence>
<accession>A3MI51</accession>
<protein>
    <recommendedName>
        <fullName evidence="1">Methylglyoxal synthase</fullName>
        <shortName evidence="1">MGS</shortName>
        <ecNumber evidence="1">4.2.3.3</ecNumber>
    </recommendedName>
</protein>
<organism>
    <name type="scientific">Burkholderia mallei (strain NCTC 10247)</name>
    <dbReference type="NCBI Taxonomy" id="320389"/>
    <lineage>
        <taxon>Bacteria</taxon>
        <taxon>Pseudomonadati</taxon>
        <taxon>Pseudomonadota</taxon>
        <taxon>Betaproteobacteria</taxon>
        <taxon>Burkholderiales</taxon>
        <taxon>Burkholderiaceae</taxon>
        <taxon>Burkholderia</taxon>
        <taxon>pseudomallei group</taxon>
    </lineage>
</organism>
<dbReference type="EC" id="4.2.3.3" evidence="1"/>
<dbReference type="EMBL" id="CP000548">
    <property type="protein sequence ID" value="ABO06302.1"/>
    <property type="molecule type" value="Genomic_DNA"/>
</dbReference>
<dbReference type="RefSeq" id="WP_004186317.1">
    <property type="nucleotide sequence ID" value="NZ_CP007802.1"/>
</dbReference>
<dbReference type="SMR" id="A3MI51"/>
<dbReference type="KEGG" id="bmaz:BM44_2645"/>
<dbReference type="KEGG" id="bmn:BMA10247_0362"/>
<dbReference type="PATRIC" id="fig|320389.8.peg.2985"/>
<dbReference type="GO" id="GO:0005829">
    <property type="term" value="C:cytosol"/>
    <property type="evidence" value="ECO:0007669"/>
    <property type="project" value="TreeGrafter"/>
</dbReference>
<dbReference type="GO" id="GO:0008929">
    <property type="term" value="F:methylglyoxal synthase activity"/>
    <property type="evidence" value="ECO:0007669"/>
    <property type="project" value="UniProtKB-UniRule"/>
</dbReference>
<dbReference type="GO" id="GO:0019242">
    <property type="term" value="P:methylglyoxal biosynthetic process"/>
    <property type="evidence" value="ECO:0007669"/>
    <property type="project" value="UniProtKB-UniRule"/>
</dbReference>
<dbReference type="CDD" id="cd01422">
    <property type="entry name" value="MGS"/>
    <property type="match status" value="1"/>
</dbReference>
<dbReference type="Gene3D" id="3.40.50.1380">
    <property type="entry name" value="Methylglyoxal synthase-like domain"/>
    <property type="match status" value="1"/>
</dbReference>
<dbReference type="HAMAP" id="MF_00549">
    <property type="entry name" value="Methylglyoxal_synth"/>
    <property type="match status" value="1"/>
</dbReference>
<dbReference type="InterPro" id="IPR004363">
    <property type="entry name" value="Methylgl_synth"/>
</dbReference>
<dbReference type="InterPro" id="IPR018148">
    <property type="entry name" value="Methylglyoxal_synth_AS"/>
</dbReference>
<dbReference type="InterPro" id="IPR011607">
    <property type="entry name" value="MGS-like_dom"/>
</dbReference>
<dbReference type="InterPro" id="IPR036914">
    <property type="entry name" value="MGS-like_dom_sf"/>
</dbReference>
<dbReference type="NCBIfam" id="TIGR00160">
    <property type="entry name" value="MGSA"/>
    <property type="match status" value="1"/>
</dbReference>
<dbReference type="NCBIfam" id="NF003559">
    <property type="entry name" value="PRK05234.1"/>
    <property type="match status" value="1"/>
</dbReference>
<dbReference type="PANTHER" id="PTHR30492">
    <property type="entry name" value="METHYLGLYOXAL SYNTHASE"/>
    <property type="match status" value="1"/>
</dbReference>
<dbReference type="PANTHER" id="PTHR30492:SF0">
    <property type="entry name" value="METHYLGLYOXAL SYNTHASE"/>
    <property type="match status" value="1"/>
</dbReference>
<dbReference type="Pfam" id="PF02142">
    <property type="entry name" value="MGS"/>
    <property type="match status" value="1"/>
</dbReference>
<dbReference type="PIRSF" id="PIRSF006614">
    <property type="entry name" value="Methylglyox_syn"/>
    <property type="match status" value="1"/>
</dbReference>
<dbReference type="SMART" id="SM00851">
    <property type="entry name" value="MGS"/>
    <property type="match status" value="1"/>
</dbReference>
<dbReference type="SUPFAM" id="SSF52335">
    <property type="entry name" value="Methylglyoxal synthase-like"/>
    <property type="match status" value="1"/>
</dbReference>
<dbReference type="PROSITE" id="PS01335">
    <property type="entry name" value="METHYLGLYOXAL_SYNTH"/>
    <property type="match status" value="1"/>
</dbReference>
<dbReference type="PROSITE" id="PS51855">
    <property type="entry name" value="MGS"/>
    <property type="match status" value="1"/>
</dbReference>
<gene>
    <name evidence="1" type="primary">mgsA</name>
    <name type="ordered locus">BMA10247_0362</name>
</gene>
<reference key="1">
    <citation type="journal article" date="2010" name="Genome Biol. Evol.">
        <title>Continuing evolution of Burkholderia mallei through genome reduction and large-scale rearrangements.</title>
        <authorList>
            <person name="Losada L."/>
            <person name="Ronning C.M."/>
            <person name="DeShazer D."/>
            <person name="Woods D."/>
            <person name="Fedorova N."/>
            <person name="Kim H.S."/>
            <person name="Shabalina S.A."/>
            <person name="Pearson T.R."/>
            <person name="Brinkac L."/>
            <person name="Tan P."/>
            <person name="Nandi T."/>
            <person name="Crabtree J."/>
            <person name="Badger J."/>
            <person name="Beckstrom-Sternberg S."/>
            <person name="Saqib M."/>
            <person name="Schutzer S.E."/>
            <person name="Keim P."/>
            <person name="Nierman W.C."/>
        </authorList>
    </citation>
    <scope>NUCLEOTIDE SEQUENCE [LARGE SCALE GENOMIC DNA]</scope>
    <source>
        <strain>NCTC 10247</strain>
    </source>
</reference>
<evidence type="ECO:0000255" key="1">
    <source>
        <dbReference type="HAMAP-Rule" id="MF_00549"/>
    </source>
</evidence>
<proteinExistence type="inferred from homology"/>